<evidence type="ECO:0000255" key="1">
    <source>
        <dbReference type="HAMAP-Rule" id="MF_01333"/>
    </source>
</evidence>
<evidence type="ECO:0000305" key="2"/>
<protein>
    <recommendedName>
        <fullName evidence="1">Large ribosomal subunit protein uL5</fullName>
    </recommendedName>
    <alternativeName>
        <fullName evidence="2">50S ribosomal protein L5</fullName>
    </alternativeName>
</protein>
<comment type="function">
    <text evidence="1">This is one of the proteins that bind and probably mediate the attachment of the 5S RNA into the large ribosomal subunit, where it forms part of the central protuberance. In the 70S ribosome it contacts protein S13 of the 30S subunit (bridge B1b), connecting the 2 subunits; this bridge is implicated in subunit movement. Contacts the P site tRNA; the 5S rRNA and some of its associated proteins might help stabilize positioning of ribosome-bound tRNAs.</text>
</comment>
<comment type="subunit">
    <text evidence="1">Part of the 50S ribosomal subunit; part of the 5S rRNA/L5/L18/L25 subcomplex. Contacts the 5S rRNA and the P site tRNA. Forms a bridge to the 30S subunit in the 70S ribosome.</text>
</comment>
<comment type="similarity">
    <text evidence="1">Belongs to the universal ribosomal protein uL5 family.</text>
</comment>
<reference key="1">
    <citation type="journal article" date="2006" name="Mol. Microbiol.">
        <title>Role of pathogenicity island-associated integrases in the genome plasticity of uropathogenic Escherichia coli strain 536.</title>
        <authorList>
            <person name="Hochhut B."/>
            <person name="Wilde C."/>
            <person name="Balling G."/>
            <person name="Middendorf B."/>
            <person name="Dobrindt U."/>
            <person name="Brzuszkiewicz E."/>
            <person name="Gottschalk G."/>
            <person name="Carniel E."/>
            <person name="Hacker J."/>
        </authorList>
    </citation>
    <scope>NUCLEOTIDE SEQUENCE [LARGE SCALE GENOMIC DNA]</scope>
    <source>
        <strain>536 / UPEC</strain>
    </source>
</reference>
<proteinExistence type="inferred from homology"/>
<feature type="chain" id="PRO_1000052731" description="Large ribosomal subunit protein uL5">
    <location>
        <begin position="1"/>
        <end position="179"/>
    </location>
</feature>
<feature type="modified residue" description="N6-acetyllysine" evidence="1">
    <location>
        <position position="3"/>
    </location>
</feature>
<keyword id="KW-0007">Acetylation</keyword>
<keyword id="KW-0687">Ribonucleoprotein</keyword>
<keyword id="KW-0689">Ribosomal protein</keyword>
<keyword id="KW-0694">RNA-binding</keyword>
<keyword id="KW-0699">rRNA-binding</keyword>
<keyword id="KW-0820">tRNA-binding</keyword>
<accession>Q0TCF3</accession>
<dbReference type="EMBL" id="CP000247">
    <property type="protein sequence ID" value="ABG71376.1"/>
    <property type="molecule type" value="Genomic_DNA"/>
</dbReference>
<dbReference type="RefSeq" id="WP_001096200.1">
    <property type="nucleotide sequence ID" value="NC_008253.1"/>
</dbReference>
<dbReference type="SMR" id="Q0TCF3"/>
<dbReference type="GeneID" id="93778679"/>
<dbReference type="KEGG" id="ecp:ECP_3396"/>
<dbReference type="HOGENOM" id="CLU_061015_2_1_6"/>
<dbReference type="Proteomes" id="UP000009182">
    <property type="component" value="Chromosome"/>
</dbReference>
<dbReference type="GO" id="GO:1990904">
    <property type="term" value="C:ribonucleoprotein complex"/>
    <property type="evidence" value="ECO:0007669"/>
    <property type="project" value="UniProtKB-KW"/>
</dbReference>
<dbReference type="GO" id="GO:0005840">
    <property type="term" value="C:ribosome"/>
    <property type="evidence" value="ECO:0007669"/>
    <property type="project" value="UniProtKB-KW"/>
</dbReference>
<dbReference type="GO" id="GO:0019843">
    <property type="term" value="F:rRNA binding"/>
    <property type="evidence" value="ECO:0007669"/>
    <property type="project" value="UniProtKB-UniRule"/>
</dbReference>
<dbReference type="GO" id="GO:0003735">
    <property type="term" value="F:structural constituent of ribosome"/>
    <property type="evidence" value="ECO:0007669"/>
    <property type="project" value="InterPro"/>
</dbReference>
<dbReference type="GO" id="GO:0000049">
    <property type="term" value="F:tRNA binding"/>
    <property type="evidence" value="ECO:0007669"/>
    <property type="project" value="UniProtKB-UniRule"/>
</dbReference>
<dbReference type="GO" id="GO:0006412">
    <property type="term" value="P:translation"/>
    <property type="evidence" value="ECO:0007669"/>
    <property type="project" value="UniProtKB-UniRule"/>
</dbReference>
<dbReference type="FunFam" id="3.30.1440.10:FF:000001">
    <property type="entry name" value="50S ribosomal protein L5"/>
    <property type="match status" value="1"/>
</dbReference>
<dbReference type="Gene3D" id="3.30.1440.10">
    <property type="match status" value="1"/>
</dbReference>
<dbReference type="HAMAP" id="MF_01333_B">
    <property type="entry name" value="Ribosomal_uL5_B"/>
    <property type="match status" value="1"/>
</dbReference>
<dbReference type="InterPro" id="IPR002132">
    <property type="entry name" value="Ribosomal_uL5"/>
</dbReference>
<dbReference type="InterPro" id="IPR020930">
    <property type="entry name" value="Ribosomal_uL5_bac-type"/>
</dbReference>
<dbReference type="InterPro" id="IPR031309">
    <property type="entry name" value="Ribosomal_uL5_C"/>
</dbReference>
<dbReference type="InterPro" id="IPR020929">
    <property type="entry name" value="Ribosomal_uL5_CS"/>
</dbReference>
<dbReference type="InterPro" id="IPR022803">
    <property type="entry name" value="Ribosomal_uL5_dom_sf"/>
</dbReference>
<dbReference type="InterPro" id="IPR031310">
    <property type="entry name" value="Ribosomal_uL5_N"/>
</dbReference>
<dbReference type="NCBIfam" id="NF000585">
    <property type="entry name" value="PRK00010.1"/>
    <property type="match status" value="1"/>
</dbReference>
<dbReference type="PANTHER" id="PTHR11994">
    <property type="entry name" value="60S RIBOSOMAL PROTEIN L11-RELATED"/>
    <property type="match status" value="1"/>
</dbReference>
<dbReference type="Pfam" id="PF00281">
    <property type="entry name" value="Ribosomal_L5"/>
    <property type="match status" value="1"/>
</dbReference>
<dbReference type="Pfam" id="PF00673">
    <property type="entry name" value="Ribosomal_L5_C"/>
    <property type="match status" value="1"/>
</dbReference>
<dbReference type="PIRSF" id="PIRSF002161">
    <property type="entry name" value="Ribosomal_L5"/>
    <property type="match status" value="1"/>
</dbReference>
<dbReference type="SUPFAM" id="SSF55282">
    <property type="entry name" value="RL5-like"/>
    <property type="match status" value="1"/>
</dbReference>
<dbReference type="PROSITE" id="PS00358">
    <property type="entry name" value="RIBOSOMAL_L5"/>
    <property type="match status" value="1"/>
</dbReference>
<sequence length="179" mass="20302">MAKLHDYYKDEVVKKLMTEFNYNSVMQVPRVEKITLNMGVGEAIADKKLLDNAAADLAAISGQKPLITKARKSVAGFKIRQGYPIGCKVTLRGERMWEFFERLITIAVPRIRDFRGLSAKSFDGRGNYSMGVREQIIFPEIDYDKVDRVRGLDITITTTAKSDEEGRALLAAFDFPFRK</sequence>
<organism>
    <name type="scientific">Escherichia coli O6:K15:H31 (strain 536 / UPEC)</name>
    <dbReference type="NCBI Taxonomy" id="362663"/>
    <lineage>
        <taxon>Bacteria</taxon>
        <taxon>Pseudomonadati</taxon>
        <taxon>Pseudomonadota</taxon>
        <taxon>Gammaproteobacteria</taxon>
        <taxon>Enterobacterales</taxon>
        <taxon>Enterobacteriaceae</taxon>
        <taxon>Escherichia</taxon>
    </lineage>
</organism>
<name>RL5_ECOL5</name>
<gene>
    <name evidence="1" type="primary">rplE</name>
    <name type="ordered locus">ECP_3396</name>
</gene>